<comment type="function">
    <text evidence="3 4 5 8 9">Component of the velvet transcription factor complex that controls sexual/asexual developmental ratio in response to light, promoting sexual development in the darkness while stimulating asexual sporulation under illumination (PubMed:18556559, PubMed:23049895). The velvet complex acts as a global regulator for secondary metabolite gene expression (PubMed:18556559). Component of the velB-VosA heterodimeric complex that plays a dual role in activating genes associated with spore maturation and repressing certain development-associated genes (PubMed:21152013, PubMed:24391470). The velB-VosA complex binds DNA through the DNA-binding domain of vosA that recognizes an 11-nucleotide consensus sequence 5'-CTGGCCGCGGC-3' consisting of two motifs in the promoters of key developmental regulatory genes (PubMed:24391470). The vosA-velB complex binds to the beta-glucan synthase fksA gene promoter in asexual spores for repression (PubMed:25960370).</text>
</comment>
<comment type="subunit">
    <text evidence="3 4 5 6 7 8 10">Component of the heterotrimeric velvet complex composed of laeA, veA and velB; VeA acting as a bridging protein between laeA and velB (PubMed:18556559, PubMed:23065618). Interacts directly with veA (PubMed:23341778, PubMed:26564476). Forms a heterodimeric complex with vosA; the formation of the velB-vosA complex is light-dependent (PubMed:21152013, PubMed:23049895, PubMed:24391470).</text>
</comment>
<comment type="interaction">
    <interactant intactId="EBI-16088850">
        <id>C8VTS4</id>
    </interactant>
    <interactant intactId="EBI-16088812">
        <id>Q5BBX1</id>
        <label>vosA</label>
    </interactant>
    <organismsDiffer>false</organismsDiffer>
    <experiments>5</experiments>
</comment>
<comment type="subcellular location">
    <subcellularLocation>
        <location evidence="3">Nucleus</location>
    </subcellularLocation>
    <subcellularLocation>
        <location evidence="3">Cytoplasm</location>
    </subcellularLocation>
    <text evidence="3">VeA increases the nuclear localization of VelB.</text>
</comment>
<comment type="induction">
    <text evidence="5">Expression is positively regulated by abaA (PubMed:23049895).</text>
</comment>
<comment type="disruption phenotype">
    <text evidence="5 8 9">Reduces the number of conidia, and decreased and delayed mRNA accumulation of the key asexual regulatory genes brlA, abaA and vosA during asexual spore formation (PubMed:23049895). Down-regulates genes associated with spore maturation and up-regulates certain development-associated genes (PubMed:24391470). Results in elevated accumulation of beta-glucan in asexual spores (PubMed:25960370).</text>
</comment>
<comment type="similarity">
    <text evidence="12">Belongs to the velvet family. VelB subfamily.</text>
</comment>
<sequence length="369" mass="40040">MYAVEDRAHSGHHPPPLSMDRIPPPSTMYPSSAGPSAMVSPAGQPEPESLSTVHDGRIWSLQVVQQPIRARMCGFGDKDRRPITPPPCIRLIVKDAQTQKEVDINSLDSSFYVVMADLWNADGTHEVNLVKHSATSPSISTAMSSSYPPPPHPTSSDYPASYQTNPYGQPVGQPVGQPVGYAGVGNYYGGSTQLQYQNAYPNPQAQYYQPMYGGMAQPQMPAAQPVTPGPGGMFTRNLIGCLSASAYRLYDTEDKIGVWFVLQDLSVRTEGIFRLKFSFVNVGKSVSDLPQSDIAEVINKGTAPILASTFSEPFQVFSAKKFPGVIESTPLSKVFANQGIKIPIRKDGVKGQGSRGRHSDEDDGLDNEY</sequence>
<reference key="1">
    <citation type="submission" date="2007-04" db="EMBL/GenBank/DDBJ databases">
        <title>A novel regulator couples sporogenesis and trehalose biogenesis in Aspergillus nidulans.</title>
        <authorList>
            <person name="Ni M."/>
            <person name="Yu J.-H."/>
        </authorList>
    </citation>
    <scope>NUCLEOTIDE SEQUENCE [MRNA]</scope>
</reference>
<reference key="2">
    <citation type="journal article" date="2005" name="Nature">
        <title>Sequencing of Aspergillus nidulans and comparative analysis with A. fumigatus and A. oryzae.</title>
        <authorList>
            <person name="Galagan J.E."/>
            <person name="Calvo S.E."/>
            <person name="Cuomo C."/>
            <person name="Ma L.-J."/>
            <person name="Wortman J.R."/>
            <person name="Batzoglou S."/>
            <person name="Lee S.-I."/>
            <person name="Bastuerkmen M."/>
            <person name="Spevak C.C."/>
            <person name="Clutterbuck J."/>
            <person name="Kapitonov V."/>
            <person name="Jurka J."/>
            <person name="Scazzocchio C."/>
            <person name="Farman M.L."/>
            <person name="Butler J."/>
            <person name="Purcell S."/>
            <person name="Harris S."/>
            <person name="Braus G.H."/>
            <person name="Draht O."/>
            <person name="Busch S."/>
            <person name="D'Enfert C."/>
            <person name="Bouchier C."/>
            <person name="Goldman G.H."/>
            <person name="Bell-Pedersen D."/>
            <person name="Griffiths-Jones S."/>
            <person name="Doonan J.H."/>
            <person name="Yu J."/>
            <person name="Vienken K."/>
            <person name="Pain A."/>
            <person name="Freitag M."/>
            <person name="Selker E.U."/>
            <person name="Archer D.B."/>
            <person name="Penalva M.A."/>
            <person name="Oakley B.R."/>
            <person name="Momany M."/>
            <person name="Tanaka T."/>
            <person name="Kumagai T."/>
            <person name="Asai K."/>
            <person name="Machida M."/>
            <person name="Nierman W.C."/>
            <person name="Denning D.W."/>
            <person name="Caddick M.X."/>
            <person name="Hynes M."/>
            <person name="Paoletti M."/>
            <person name="Fischer R."/>
            <person name="Miller B.L."/>
            <person name="Dyer P.S."/>
            <person name="Sachs M.S."/>
            <person name="Osmani S.A."/>
            <person name="Birren B.W."/>
        </authorList>
    </citation>
    <scope>NUCLEOTIDE SEQUENCE [LARGE SCALE GENOMIC DNA]</scope>
    <source>
        <strain>FGSC A4 / ATCC 38163 / CBS 112.46 / NRRL 194 / M139</strain>
    </source>
</reference>
<reference key="3">
    <citation type="journal article" date="2009" name="Fungal Genet. Biol.">
        <title>The 2008 update of the Aspergillus nidulans genome annotation: a community effort.</title>
        <authorList>
            <person name="Wortman J.R."/>
            <person name="Gilsenan J.M."/>
            <person name="Joardar V."/>
            <person name="Deegan J."/>
            <person name="Clutterbuck J."/>
            <person name="Andersen M.R."/>
            <person name="Archer D."/>
            <person name="Bencina M."/>
            <person name="Braus G."/>
            <person name="Coutinho P."/>
            <person name="von Dohren H."/>
            <person name="Doonan J."/>
            <person name="Driessen A.J."/>
            <person name="Durek P."/>
            <person name="Espeso E."/>
            <person name="Fekete E."/>
            <person name="Flipphi M."/>
            <person name="Estrada C.G."/>
            <person name="Geysens S."/>
            <person name="Goldman G."/>
            <person name="de Groot P.W."/>
            <person name="Hansen K."/>
            <person name="Harris S.D."/>
            <person name="Heinekamp T."/>
            <person name="Helmstaedt K."/>
            <person name="Henrissat B."/>
            <person name="Hofmann G."/>
            <person name="Homan T."/>
            <person name="Horio T."/>
            <person name="Horiuchi H."/>
            <person name="James S."/>
            <person name="Jones M."/>
            <person name="Karaffa L."/>
            <person name="Karanyi Z."/>
            <person name="Kato M."/>
            <person name="Keller N."/>
            <person name="Kelly D.E."/>
            <person name="Kiel J.A."/>
            <person name="Kim J.M."/>
            <person name="van der Klei I.J."/>
            <person name="Klis F.M."/>
            <person name="Kovalchuk A."/>
            <person name="Krasevec N."/>
            <person name="Kubicek C.P."/>
            <person name="Liu B."/>
            <person name="Maccabe A."/>
            <person name="Meyer V."/>
            <person name="Mirabito P."/>
            <person name="Miskei M."/>
            <person name="Mos M."/>
            <person name="Mullins J."/>
            <person name="Nelson D.R."/>
            <person name="Nielsen J."/>
            <person name="Oakley B.R."/>
            <person name="Osmani S.A."/>
            <person name="Pakula T."/>
            <person name="Paszewski A."/>
            <person name="Paulsen I."/>
            <person name="Pilsyk S."/>
            <person name="Pocsi I."/>
            <person name="Punt P.J."/>
            <person name="Ram A.F."/>
            <person name="Ren Q."/>
            <person name="Robellet X."/>
            <person name="Robson G."/>
            <person name="Seiboth B."/>
            <person name="van Solingen P."/>
            <person name="Specht T."/>
            <person name="Sun J."/>
            <person name="Taheri-Talesh N."/>
            <person name="Takeshita N."/>
            <person name="Ussery D."/>
            <person name="vanKuyk P.A."/>
            <person name="Visser H."/>
            <person name="van de Vondervoort P.J."/>
            <person name="de Vries R.P."/>
            <person name="Walton J."/>
            <person name="Xiang X."/>
            <person name="Xiong Y."/>
            <person name="Zeng A.P."/>
            <person name="Brandt B.W."/>
            <person name="Cornell M.J."/>
            <person name="van den Hondel C.A."/>
            <person name="Visser J."/>
            <person name="Oliver S.G."/>
            <person name="Turner G."/>
        </authorList>
    </citation>
    <scope>GENOME REANNOTATION</scope>
    <source>
        <strain>FGSC A4 / ATCC 38163 / CBS 112.46 / NRRL 194 / M139</strain>
    </source>
</reference>
<reference key="4">
    <citation type="journal article" date="2008" name="Science">
        <title>VelB/VeA/LaeA complex coordinates light signal with fungal development and secondary metabolism.</title>
        <authorList>
            <person name="Bayram O."/>
            <person name="Krappmann S."/>
            <person name="Ni M."/>
            <person name="Bok J.W."/>
            <person name="Helmstaedt K."/>
            <person name="Valerius O."/>
            <person name="Braus-Stromeyer S."/>
            <person name="Kwon N.J."/>
            <person name="Keller N.P."/>
            <person name="Yu J.H."/>
            <person name="Braus G.H."/>
        </authorList>
    </citation>
    <scope>IDENTIFICATION BY MASS SPECTROMETRY</scope>
    <scope>IDENTIFICATION IN THE VELVET COMPLEX</scope>
    <scope>FUNCTION</scope>
    <scope>SUBCELLULAR LOCATION</scope>
</reference>
<reference key="5">
    <citation type="journal article" date="2010" name="PLoS Genet.">
        <title>LaeA control of velvet family regulatory proteins for light-dependent development and fungal cell-type specificity.</title>
        <authorList>
            <person name="Sarikaya Bayram O."/>
            <person name="Bayram O."/>
            <person name="Valerius O."/>
            <person name="Park H.S."/>
            <person name="Irniger S."/>
            <person name="Gerke J."/>
            <person name="Ni M."/>
            <person name="Han K.H."/>
            <person name="Yu J.H."/>
            <person name="Braus G.H."/>
        </authorList>
    </citation>
    <scope>INTERACTION WITH VOSA</scope>
    <scope>FUNCTION</scope>
</reference>
<reference key="6">
    <citation type="journal article" date="2012" name="Methods Mol. Biol.">
        <title>Identification of protein complexes from filamentous fungi with tandem affinity purification.</title>
        <authorList>
            <person name="Bayram O."/>
            <person name="Bayram O.S."/>
            <person name="Valerius O."/>
            <person name="Joehnk B."/>
            <person name="Braus G.H."/>
        </authorList>
    </citation>
    <scope>IDENTIFICATION IN THE VELVET COMPLEX</scope>
</reference>
<reference key="7">
    <citation type="journal article" date="2012" name="PLoS ONE">
        <title>The role, interaction and regulation of the velvet regulator VelB in Aspergillus nidulans.</title>
        <authorList>
            <person name="Park H.S."/>
            <person name="Ni M."/>
            <person name="Jeong K.C."/>
            <person name="Kim Y.H."/>
            <person name="Yu J.H."/>
        </authorList>
    </citation>
    <scope>FUNCTION</scope>
    <scope>DISRUPTION PHENOTYPE</scope>
    <scope>INDUCTION</scope>
    <scope>INTERACTION WITH VOSA</scope>
</reference>
<reference key="8">
    <citation type="journal article" date="2013" name="PLoS Genet.">
        <title>Secondary metabolism and development is mediated by LlmF control of VeA subcellular localization in Aspergillus nidulans.</title>
        <authorList>
            <person name="Palmer J.M."/>
            <person name="Theisen J.M."/>
            <person name="Duran R.M."/>
            <person name="Grayburn W.S."/>
            <person name="Calvo A.M."/>
            <person name="Keller N.P."/>
        </authorList>
    </citation>
    <scope>INTERACTION WITH VEA</scope>
</reference>
<reference key="9">
    <citation type="journal article" date="2016" name="Mol. Microbiol.">
        <title>A phosphorylation code of the Aspergillus nidulans global regulator VelvetA (VeA) determines specific functions.</title>
        <authorList>
            <person name="Rauscher S."/>
            <person name="Pacher S."/>
            <person name="Hedtke M."/>
            <person name="Kniemeyer O."/>
            <person name="Fischer R."/>
        </authorList>
    </citation>
    <scope>INTERACTION WITH VEA</scope>
</reference>
<reference key="10">
    <citation type="journal article" date="2015" name="Sci. Rep.">
        <title>Velvet-mediated repression of beta-glucan synthesis in Aspergillus nidulans spores.</title>
        <authorList>
            <person name="Park H.S."/>
            <person name="Yu Y.M."/>
            <person name="Lee M.K."/>
            <person name="Maeng P.J."/>
            <person name="Kim S.C."/>
            <person name="Yu J.H."/>
        </authorList>
    </citation>
    <scope>FUNCTION</scope>
    <scope>DISRUPTION PHENOTYPE</scope>
</reference>
<reference key="11">
    <citation type="journal article" date="2013" name="PLoS Biol.">
        <title>The velvet family of fungal regulators contains a DNA-binding domain structurally similar to NF-kappaB.</title>
        <authorList>
            <person name="Ahmed Y.L."/>
            <person name="Gerke J."/>
            <person name="Park H.S."/>
            <person name="Bayram O."/>
            <person name="Neumann P."/>
            <person name="Ni M."/>
            <person name="Dickmanns A."/>
            <person name="Kim S.C."/>
            <person name="Yu J.H."/>
            <person name="Braus G.H."/>
            <person name="Ficner R."/>
        </authorList>
    </citation>
    <scope>X-RAY CRYSTALLOGRAPHY (2.20 ANGSTROMS) IN COMPLEX WITH VOSA</scope>
    <scope>FUNCTION</scope>
    <scope>DISRUPTION PHENOTYPE</scope>
</reference>
<dbReference type="EMBL" id="EF540815">
    <property type="protein sequence ID" value="ABQ17967.1"/>
    <property type="molecule type" value="mRNA"/>
</dbReference>
<dbReference type="EMBL" id="BN001308">
    <property type="protein sequence ID" value="CBF89638.1"/>
    <property type="molecule type" value="Genomic_DNA"/>
</dbReference>
<dbReference type="RefSeq" id="XP_657967.2">
    <property type="nucleotide sequence ID" value="XM_652875.2"/>
</dbReference>
<dbReference type="PDB" id="4N6R">
    <property type="method" value="X-ray"/>
    <property type="resolution" value="2.20 A"/>
    <property type="chains" value="B=1-369"/>
</dbReference>
<dbReference type="PDBsum" id="4N6R"/>
<dbReference type="SMR" id="C8VTS4"/>
<dbReference type="DIP" id="DIP-60680N"/>
<dbReference type="IntAct" id="C8VTS4">
    <property type="interactions" value="1"/>
</dbReference>
<dbReference type="STRING" id="227321.C8VTS4"/>
<dbReference type="EnsemblFungi" id="CBF89638">
    <property type="protein sequence ID" value="CBF89638"/>
    <property type="gene ID" value="ANIA_00363"/>
</dbReference>
<dbReference type="GeneID" id="2876142"/>
<dbReference type="KEGG" id="ani:ANIA_00363"/>
<dbReference type="VEuPathDB" id="FungiDB:AN0363"/>
<dbReference type="eggNOG" id="ENOG502S1B4">
    <property type="taxonomic scope" value="Eukaryota"/>
</dbReference>
<dbReference type="HOGENOM" id="CLU_022491_0_0_1"/>
<dbReference type="InParanoid" id="C8VTS4"/>
<dbReference type="OMA" id="YQDGRSW"/>
<dbReference type="OrthoDB" id="1746739at2759"/>
<dbReference type="EvolutionaryTrace" id="C8VTS4"/>
<dbReference type="Proteomes" id="UP000000560">
    <property type="component" value="Chromosome VIII"/>
</dbReference>
<dbReference type="GO" id="GO:0005737">
    <property type="term" value="C:cytoplasm"/>
    <property type="evidence" value="ECO:0000314"/>
    <property type="project" value="AspGD"/>
</dbReference>
<dbReference type="GO" id="GO:0005634">
    <property type="term" value="C:nucleus"/>
    <property type="evidence" value="ECO:0000314"/>
    <property type="project" value="AspGD"/>
</dbReference>
<dbReference type="GO" id="GO:0071482">
    <property type="term" value="P:cellular response to light stimulus"/>
    <property type="evidence" value="ECO:0000315"/>
    <property type="project" value="AspGD"/>
</dbReference>
<dbReference type="GO" id="GO:0048315">
    <property type="term" value="P:conidium formation"/>
    <property type="evidence" value="ECO:0000315"/>
    <property type="project" value="AspGD"/>
</dbReference>
<dbReference type="GO" id="GO:0075308">
    <property type="term" value="P:negative regulation of conidium formation"/>
    <property type="evidence" value="ECO:0000315"/>
    <property type="project" value="AspGD"/>
</dbReference>
<dbReference type="GO" id="GO:0043941">
    <property type="term" value="P:positive regulation of sexual sporulation resulting in formation of a cellular spore"/>
    <property type="evidence" value="ECO:0000315"/>
    <property type="project" value="AspGD"/>
</dbReference>
<dbReference type="GO" id="GO:0010914">
    <property type="term" value="P:positive regulation of sterigmatocystin biosynthetic process"/>
    <property type="evidence" value="ECO:0000315"/>
    <property type="project" value="AspGD"/>
</dbReference>
<dbReference type="GO" id="GO:0043935">
    <property type="term" value="P:sexual sporulation resulting in formation of a cellular spore"/>
    <property type="evidence" value="ECO:0000315"/>
    <property type="project" value="AspGD"/>
</dbReference>
<dbReference type="GO" id="GO:0030435">
    <property type="term" value="P:sporulation resulting in formation of a cellular spore"/>
    <property type="evidence" value="ECO:0000318"/>
    <property type="project" value="GO_Central"/>
</dbReference>
<dbReference type="GO" id="GO:0045461">
    <property type="term" value="P:sterigmatocystin biosynthetic process"/>
    <property type="evidence" value="ECO:0000315"/>
    <property type="project" value="AspGD"/>
</dbReference>
<dbReference type="GO" id="GO:0005992">
    <property type="term" value="P:trehalose biosynthetic process"/>
    <property type="evidence" value="ECO:0000315"/>
    <property type="project" value="AspGD"/>
</dbReference>
<dbReference type="FunFam" id="2.60.40.3960:FF:000002">
    <property type="entry name" value="VeA-like protein"/>
    <property type="match status" value="1"/>
</dbReference>
<dbReference type="Gene3D" id="2.60.40.3960">
    <property type="entry name" value="Velvet domain"/>
    <property type="match status" value="2"/>
</dbReference>
<dbReference type="InterPro" id="IPR021740">
    <property type="entry name" value="Velvet"/>
</dbReference>
<dbReference type="InterPro" id="IPR037525">
    <property type="entry name" value="Velvet_dom"/>
</dbReference>
<dbReference type="InterPro" id="IPR038491">
    <property type="entry name" value="Velvet_dom_sf"/>
</dbReference>
<dbReference type="PANTHER" id="PTHR33572">
    <property type="entry name" value="SPORE DEVELOPMENT REGULATOR VOSA"/>
    <property type="match status" value="1"/>
</dbReference>
<dbReference type="PANTHER" id="PTHR33572:SF3">
    <property type="entry name" value="VELVET COMPLEX SUBUNIT B"/>
    <property type="match status" value="1"/>
</dbReference>
<dbReference type="Pfam" id="PF11754">
    <property type="entry name" value="Velvet"/>
    <property type="match status" value="1"/>
</dbReference>
<dbReference type="PROSITE" id="PS51821">
    <property type="entry name" value="VELVET"/>
    <property type="match status" value="1"/>
</dbReference>
<gene>
    <name evidence="11" type="primary">velB</name>
    <name type="ORF">ANIA_00363</name>
</gene>
<feature type="chain" id="PRO_0000435778" description="Velvet complex subunit B">
    <location>
        <begin position="1"/>
        <end position="369"/>
    </location>
</feature>
<feature type="domain" description="Velvet" evidence="1">
    <location>
        <begin position="53"/>
        <end position="345"/>
    </location>
</feature>
<feature type="region of interest" description="Disordered" evidence="2">
    <location>
        <begin position="1"/>
        <end position="54"/>
    </location>
</feature>
<feature type="region of interest" description="Disordered" evidence="2">
    <location>
        <begin position="138"/>
        <end position="174"/>
    </location>
</feature>
<feature type="region of interest" description="Disordered" evidence="2">
    <location>
        <begin position="346"/>
        <end position="369"/>
    </location>
</feature>
<feature type="compositionally biased region" description="Pro residues" evidence="2">
    <location>
        <begin position="13"/>
        <end position="27"/>
    </location>
</feature>
<feature type="strand" evidence="13">
    <location>
        <begin position="50"/>
        <end position="54"/>
    </location>
</feature>
<feature type="strand" evidence="13">
    <location>
        <begin position="57"/>
        <end position="65"/>
    </location>
</feature>
<feature type="strand" evidence="13">
    <location>
        <begin position="69"/>
        <end position="71"/>
    </location>
</feature>
<feature type="strand" evidence="13">
    <location>
        <begin position="88"/>
        <end position="95"/>
    </location>
</feature>
<feature type="turn" evidence="13">
    <location>
        <begin position="96"/>
        <end position="98"/>
    </location>
</feature>
<feature type="helix" evidence="13">
    <location>
        <begin position="104"/>
        <end position="106"/>
    </location>
</feature>
<feature type="strand" evidence="13">
    <location>
        <begin position="112"/>
        <end position="120"/>
    </location>
</feature>
<feature type="strand" evidence="13">
    <location>
        <begin position="123"/>
        <end position="126"/>
    </location>
</feature>
<feature type="strand" evidence="13">
    <location>
        <begin position="235"/>
        <end position="240"/>
    </location>
</feature>
<feature type="strand" evidence="13">
    <location>
        <begin position="243"/>
        <end position="245"/>
    </location>
</feature>
<feature type="strand" evidence="13">
    <location>
        <begin position="247"/>
        <end position="250"/>
    </location>
</feature>
<feature type="strand" evidence="13">
    <location>
        <begin position="256"/>
        <end position="261"/>
    </location>
</feature>
<feature type="strand" evidence="13">
    <location>
        <begin position="265"/>
        <end position="269"/>
    </location>
</feature>
<feature type="strand" evidence="13">
    <location>
        <begin position="271"/>
        <end position="281"/>
    </location>
</feature>
<feature type="strand" evidence="13">
    <location>
        <begin position="300"/>
        <end position="310"/>
    </location>
</feature>
<feature type="strand" evidence="13">
    <location>
        <begin position="314"/>
        <end position="317"/>
    </location>
</feature>
<feature type="turn" evidence="13">
    <location>
        <begin position="319"/>
        <end position="321"/>
    </location>
</feature>
<feature type="helix" evidence="13">
    <location>
        <begin position="330"/>
        <end position="337"/>
    </location>
</feature>
<organism>
    <name type="scientific">Emericella nidulans (strain FGSC A4 / ATCC 38163 / CBS 112.46 / NRRL 194 / M139)</name>
    <name type="common">Aspergillus nidulans</name>
    <dbReference type="NCBI Taxonomy" id="227321"/>
    <lineage>
        <taxon>Eukaryota</taxon>
        <taxon>Fungi</taxon>
        <taxon>Dikarya</taxon>
        <taxon>Ascomycota</taxon>
        <taxon>Pezizomycotina</taxon>
        <taxon>Eurotiomycetes</taxon>
        <taxon>Eurotiomycetidae</taxon>
        <taxon>Eurotiales</taxon>
        <taxon>Aspergillaceae</taxon>
        <taxon>Aspergillus</taxon>
        <taxon>Aspergillus subgen. Nidulantes</taxon>
    </lineage>
</organism>
<proteinExistence type="evidence at protein level"/>
<accession>C8VTS4</accession>
<accession>A5HMG5</accession>
<keyword id="KW-0002">3D-structure</keyword>
<keyword id="KW-0963">Cytoplasm</keyword>
<keyword id="KW-0539">Nucleus</keyword>
<keyword id="KW-1185">Reference proteome</keyword>
<keyword id="KW-0749">Sporulation</keyword>
<keyword id="KW-0804">Transcription</keyword>
<keyword id="KW-0805">Transcription regulation</keyword>
<evidence type="ECO:0000255" key="1">
    <source>
        <dbReference type="PROSITE-ProRule" id="PRU01165"/>
    </source>
</evidence>
<evidence type="ECO:0000256" key="2">
    <source>
        <dbReference type="SAM" id="MobiDB-lite"/>
    </source>
</evidence>
<evidence type="ECO:0000269" key="3">
    <source>
    </source>
</evidence>
<evidence type="ECO:0000269" key="4">
    <source>
    </source>
</evidence>
<evidence type="ECO:0000269" key="5">
    <source>
    </source>
</evidence>
<evidence type="ECO:0000269" key="6">
    <source>
    </source>
</evidence>
<evidence type="ECO:0000269" key="7">
    <source>
    </source>
</evidence>
<evidence type="ECO:0000269" key="8">
    <source>
    </source>
</evidence>
<evidence type="ECO:0000269" key="9">
    <source>
    </source>
</evidence>
<evidence type="ECO:0000269" key="10">
    <source>
    </source>
</evidence>
<evidence type="ECO:0000303" key="11">
    <source>
    </source>
</evidence>
<evidence type="ECO:0000305" key="12"/>
<evidence type="ECO:0007829" key="13">
    <source>
        <dbReference type="PDB" id="4N6R"/>
    </source>
</evidence>
<protein>
    <recommendedName>
        <fullName evidence="12">Velvet complex subunit B</fullName>
    </recommendedName>
</protein>
<name>VELB_EMENI</name>